<evidence type="ECO:0000255" key="1">
    <source>
        <dbReference type="HAMAP-Rule" id="MF_00157"/>
    </source>
</evidence>
<evidence type="ECO:0000269" key="2">
    <source>
    </source>
</evidence>
<evidence type="ECO:0007829" key="3">
    <source>
        <dbReference type="PDB" id="2F96"/>
    </source>
</evidence>
<organism>
    <name type="scientific">Pseudomonas aeruginosa (strain ATCC 15692 / DSM 22644 / CIP 104116 / JCM 14847 / LMG 12228 / 1C / PRS 101 / PAO1)</name>
    <dbReference type="NCBI Taxonomy" id="208964"/>
    <lineage>
        <taxon>Bacteria</taxon>
        <taxon>Pseudomonadati</taxon>
        <taxon>Pseudomonadota</taxon>
        <taxon>Gammaproteobacteria</taxon>
        <taxon>Pseudomonadales</taxon>
        <taxon>Pseudomonadaceae</taxon>
        <taxon>Pseudomonas</taxon>
    </lineage>
</organism>
<protein>
    <recommendedName>
        <fullName evidence="1">Ribonuclease T</fullName>
        <ecNumber evidence="1">3.1.13.-</ecNumber>
    </recommendedName>
    <alternativeName>
        <fullName evidence="1">Exoribonuclease T</fullName>
        <shortName evidence="1">RNase T</shortName>
    </alternativeName>
</protein>
<name>RNT_PSEAE</name>
<proteinExistence type="evidence at protein level"/>
<dbReference type="EC" id="3.1.13.-" evidence="1"/>
<dbReference type="EMBL" id="AE004091">
    <property type="protein sequence ID" value="AAG06916.1"/>
    <property type="molecule type" value="Genomic_DNA"/>
</dbReference>
<dbReference type="PIR" id="F83204">
    <property type="entry name" value="F83204"/>
</dbReference>
<dbReference type="RefSeq" id="NP_252218.1">
    <property type="nucleotide sequence ID" value="NC_002516.2"/>
</dbReference>
<dbReference type="RefSeq" id="WP_003092070.1">
    <property type="nucleotide sequence ID" value="NZ_QZGE01000001.1"/>
</dbReference>
<dbReference type="PDB" id="2F96">
    <property type="method" value="X-ray"/>
    <property type="resolution" value="2.09 A"/>
    <property type="chains" value="A/B=1-224"/>
</dbReference>
<dbReference type="PDBsum" id="2F96"/>
<dbReference type="SMR" id="Q9HY82"/>
<dbReference type="DIP" id="DIP-29430N"/>
<dbReference type="FunCoup" id="Q9HY82">
    <property type="interactions" value="44"/>
</dbReference>
<dbReference type="STRING" id="208964.PA3528"/>
<dbReference type="PaxDb" id="208964-PA3528"/>
<dbReference type="GeneID" id="879810"/>
<dbReference type="KEGG" id="pae:PA3528"/>
<dbReference type="PATRIC" id="fig|208964.12.peg.3692"/>
<dbReference type="PseudoCAP" id="PA3528"/>
<dbReference type="HOGENOM" id="CLU_082724_0_0_6"/>
<dbReference type="InParanoid" id="Q9HY82"/>
<dbReference type="OrthoDB" id="9778264at2"/>
<dbReference type="PhylomeDB" id="Q9HY82"/>
<dbReference type="BioCyc" id="PAER208964:G1FZ6-3596-MONOMER"/>
<dbReference type="BRENDA" id="3.1.13.3">
    <property type="organism ID" value="5087"/>
</dbReference>
<dbReference type="EvolutionaryTrace" id="Q9HY82"/>
<dbReference type="Proteomes" id="UP000002438">
    <property type="component" value="Chromosome"/>
</dbReference>
<dbReference type="GO" id="GO:0005829">
    <property type="term" value="C:cytosol"/>
    <property type="evidence" value="ECO:0000318"/>
    <property type="project" value="GO_Central"/>
</dbReference>
<dbReference type="GO" id="GO:0008408">
    <property type="term" value="F:3'-5' exonuclease activity"/>
    <property type="evidence" value="ECO:0000318"/>
    <property type="project" value="GO_Central"/>
</dbReference>
<dbReference type="GO" id="GO:0000287">
    <property type="term" value="F:magnesium ion binding"/>
    <property type="evidence" value="ECO:0007669"/>
    <property type="project" value="UniProtKB-UniRule"/>
</dbReference>
<dbReference type="GO" id="GO:0003676">
    <property type="term" value="F:nucleic acid binding"/>
    <property type="evidence" value="ECO:0007669"/>
    <property type="project" value="InterPro"/>
</dbReference>
<dbReference type="GO" id="GO:0016896">
    <property type="term" value="F:RNA exonuclease activity, producing 5'-phosphomonoesters"/>
    <property type="evidence" value="ECO:0007669"/>
    <property type="project" value="UniProtKB-UniRule"/>
</dbReference>
<dbReference type="GO" id="GO:0045004">
    <property type="term" value="P:DNA replication proofreading"/>
    <property type="evidence" value="ECO:0000318"/>
    <property type="project" value="GO_Central"/>
</dbReference>
<dbReference type="GO" id="GO:0008033">
    <property type="term" value="P:tRNA processing"/>
    <property type="evidence" value="ECO:0007669"/>
    <property type="project" value="UniProtKB-KW"/>
</dbReference>
<dbReference type="CDD" id="cd06134">
    <property type="entry name" value="RNaseT"/>
    <property type="match status" value="1"/>
</dbReference>
<dbReference type="FunFam" id="3.30.420.10:FF:000009">
    <property type="entry name" value="Ribonuclease T"/>
    <property type="match status" value="1"/>
</dbReference>
<dbReference type="Gene3D" id="3.30.420.10">
    <property type="entry name" value="Ribonuclease H-like superfamily/Ribonuclease H"/>
    <property type="match status" value="1"/>
</dbReference>
<dbReference type="HAMAP" id="MF_00157">
    <property type="entry name" value="RNase_T"/>
    <property type="match status" value="1"/>
</dbReference>
<dbReference type="InterPro" id="IPR013520">
    <property type="entry name" value="Exonuclease_RNaseT/DNA_pol3"/>
</dbReference>
<dbReference type="InterPro" id="IPR005987">
    <property type="entry name" value="RNase_T"/>
</dbReference>
<dbReference type="InterPro" id="IPR012337">
    <property type="entry name" value="RNaseH-like_sf"/>
</dbReference>
<dbReference type="InterPro" id="IPR036397">
    <property type="entry name" value="RNaseH_sf"/>
</dbReference>
<dbReference type="NCBIfam" id="TIGR01298">
    <property type="entry name" value="RNaseT"/>
    <property type="match status" value="1"/>
</dbReference>
<dbReference type="PANTHER" id="PTHR30231">
    <property type="entry name" value="DNA POLYMERASE III SUBUNIT EPSILON"/>
    <property type="match status" value="1"/>
</dbReference>
<dbReference type="PANTHER" id="PTHR30231:SF2">
    <property type="entry name" value="RIBONUCLEASE T"/>
    <property type="match status" value="1"/>
</dbReference>
<dbReference type="Pfam" id="PF00929">
    <property type="entry name" value="RNase_T"/>
    <property type="match status" value="1"/>
</dbReference>
<dbReference type="SMART" id="SM00479">
    <property type="entry name" value="EXOIII"/>
    <property type="match status" value="1"/>
</dbReference>
<dbReference type="SUPFAM" id="SSF53098">
    <property type="entry name" value="Ribonuclease H-like"/>
    <property type="match status" value="1"/>
</dbReference>
<reference key="1">
    <citation type="journal article" date="2000" name="Nature">
        <title>Complete genome sequence of Pseudomonas aeruginosa PAO1, an opportunistic pathogen.</title>
        <authorList>
            <person name="Stover C.K."/>
            <person name="Pham X.-Q.T."/>
            <person name="Erwin A.L."/>
            <person name="Mizoguchi S.D."/>
            <person name="Warrener P."/>
            <person name="Hickey M.J."/>
            <person name="Brinkman F.S.L."/>
            <person name="Hufnagle W.O."/>
            <person name="Kowalik D.J."/>
            <person name="Lagrou M."/>
            <person name="Garber R.L."/>
            <person name="Goltry L."/>
            <person name="Tolentino E."/>
            <person name="Westbrock-Wadman S."/>
            <person name="Yuan Y."/>
            <person name="Brody L.L."/>
            <person name="Coulter S.N."/>
            <person name="Folger K.R."/>
            <person name="Kas A."/>
            <person name="Larbig K."/>
            <person name="Lim R.M."/>
            <person name="Smith K.A."/>
            <person name="Spencer D.H."/>
            <person name="Wong G.K.-S."/>
            <person name="Wu Z."/>
            <person name="Paulsen I.T."/>
            <person name="Reizer J."/>
            <person name="Saier M.H. Jr."/>
            <person name="Hancock R.E.W."/>
            <person name="Lory S."/>
            <person name="Olson M.V."/>
        </authorList>
    </citation>
    <scope>NUCLEOTIDE SEQUENCE [LARGE SCALE GENOMIC DNA]</scope>
    <source>
        <strain>ATCC 15692 / DSM 22644 / CIP 104116 / JCM 14847 / LMG 12228 / 1C / PRS 101 / PAO1</strain>
    </source>
</reference>
<reference key="2">
    <citation type="journal article" date="2007" name="Structure">
        <title>Crystal structure of RNase T, an exoribonuclease involved in tRNA maturation and end turnover.</title>
        <authorList>
            <person name="Zuo Y."/>
            <person name="Zheng H."/>
            <person name="Wang Y."/>
            <person name="Chruszcz M."/>
            <person name="Cymborowski M."/>
            <person name="Skarina T."/>
            <person name="Savchenko A."/>
            <person name="Malhotra A."/>
            <person name="Minor W."/>
        </authorList>
    </citation>
    <scope>X-RAY CRYSTALLOGRAPHY (2.09 ANGSTROMS) IN COMPLEX WITH MAGNESIUM</scope>
    <scope>COFACTOR</scope>
    <scope>SUBUNIT</scope>
</reference>
<comment type="function">
    <text evidence="1">Trims short 3' overhangs of a variety of RNA species, leaving a one or two nucleotide 3' overhang. Responsible for the end-turnover of tRNA: specifically removes the terminal AMP residue from uncharged tRNA (tRNA-C-C-A). Also appears to be involved in tRNA biosynthesis.</text>
</comment>
<comment type="cofactor">
    <cofactor evidence="1">
        <name>Mg(2+)</name>
        <dbReference type="ChEBI" id="CHEBI:18420"/>
    </cofactor>
    <text evidence="1">Binds two Mg(2+) per subunit. The active form of the enzyme binds two Mg(2+) ions in its active site. The first Mg(2+) forms only one salt bridge with the protein.</text>
</comment>
<comment type="subunit">
    <text evidence="1 2">Homodimer.</text>
</comment>
<comment type="miscellaneous">
    <text>Member of the DEDD group of RNAses that are characterized by the presence of four acidic residues in the active site. These residues are conserved even when the proteins have highly divergent sequences.</text>
</comment>
<comment type="similarity">
    <text evidence="1">Belongs to the RNase T family.</text>
</comment>
<sequence length="224" mass="24723">MSEDNFDDEFDGSLPSGPRHPMARRFRGYLPVVVDVETGGFNSATDALLEIAATTVGMDEKGFLFPEHTYFFRIEPFEGANIEPAALEFTGIKLDHPLRMAVQEEAALTEIFRGIRKALKANGCKRAILVGHNSSFDLGFLNAAVARTGIKRNPFHPFSSFDTATLAGLAYGQTVLAKACQAAGMEFDNREAHSARYDTEKTAELFCGIVNRWKEMGGWMDDDD</sequence>
<feature type="chain" id="PRO_0000208969" description="Ribonuclease T">
    <location>
        <begin position="1"/>
        <end position="224"/>
    </location>
</feature>
<feature type="domain" description="Exonuclease" evidence="1">
    <location>
        <begin position="32"/>
        <end position="206"/>
    </location>
</feature>
<feature type="active site" description="Proton donor/acceptor" evidence="1">
    <location>
        <position position="193"/>
    </location>
</feature>
<feature type="binding site" evidence="1 2">
    <location>
        <position position="35"/>
    </location>
    <ligand>
        <name>Mg(2+)</name>
        <dbReference type="ChEBI" id="CHEBI:18420"/>
        <label>1</label>
        <note>catalytic</note>
    </ligand>
</feature>
<feature type="binding site" evidence="1">
    <location>
        <position position="35"/>
    </location>
    <ligand>
        <name>Mg(2+)</name>
        <dbReference type="ChEBI" id="CHEBI:18420"/>
        <label>2</label>
        <note>catalytic</note>
    </ligand>
</feature>
<feature type="binding site" evidence="1">
    <location>
        <position position="37"/>
    </location>
    <ligand>
        <name>Mg(2+)</name>
        <dbReference type="ChEBI" id="CHEBI:18420"/>
        <label>2</label>
        <note>catalytic</note>
    </ligand>
</feature>
<feature type="binding site" evidence="1">
    <location>
        <position position="193"/>
    </location>
    <ligand>
        <name>Mg(2+)</name>
        <dbReference type="ChEBI" id="CHEBI:18420"/>
        <label>2</label>
        <note>catalytic</note>
    </ligand>
</feature>
<feature type="binding site" evidence="1">
    <location>
        <position position="198"/>
    </location>
    <ligand>
        <name>Mg(2+)</name>
        <dbReference type="ChEBI" id="CHEBI:18420"/>
        <label>2</label>
        <note>catalytic</note>
    </ligand>
</feature>
<feature type="site" description="Important for substrate binding and specificity" evidence="1">
    <location>
        <position position="41"/>
    </location>
</feature>
<feature type="site" description="Important for substrate binding and specificity" evidence="1">
    <location>
        <position position="89"/>
    </location>
</feature>
<feature type="site" description="Important for substrate binding and specificity" evidence="1">
    <location>
        <position position="136"/>
    </location>
</feature>
<feature type="site" description="Important for substrate binding and specificity" evidence="1">
    <location>
        <position position="158"/>
    </location>
</feature>
<feature type="helix" evidence="3">
    <location>
        <begin position="21"/>
        <end position="25"/>
    </location>
</feature>
<feature type="turn" evidence="3">
    <location>
        <begin position="26"/>
        <end position="28"/>
    </location>
</feature>
<feature type="strand" evidence="3">
    <location>
        <begin position="29"/>
        <end position="41"/>
    </location>
</feature>
<feature type="turn" evidence="3">
    <location>
        <begin position="43"/>
        <end position="45"/>
    </location>
</feature>
<feature type="strand" evidence="3">
    <location>
        <begin position="48"/>
        <end position="58"/>
    </location>
</feature>
<feature type="strand" evidence="3">
    <location>
        <begin position="64"/>
        <end position="74"/>
    </location>
</feature>
<feature type="helix" evidence="3">
    <location>
        <begin position="84"/>
        <end position="90"/>
    </location>
</feature>
<feature type="helix" evidence="3">
    <location>
        <begin position="104"/>
        <end position="121"/>
    </location>
</feature>
<feature type="strand" evidence="3">
    <location>
        <begin position="125"/>
        <end position="133"/>
    </location>
</feature>
<feature type="helix" evidence="3">
    <location>
        <begin position="134"/>
        <end position="148"/>
    </location>
</feature>
<feature type="strand" evidence="3">
    <location>
        <begin position="155"/>
        <end position="162"/>
    </location>
</feature>
<feature type="helix" evidence="3">
    <location>
        <begin position="163"/>
        <end position="171"/>
    </location>
</feature>
<feature type="helix" evidence="3">
    <location>
        <begin position="176"/>
        <end position="182"/>
    </location>
</feature>
<feature type="helix" evidence="3">
    <location>
        <begin position="195"/>
        <end position="215"/>
    </location>
</feature>
<gene>
    <name evidence="1" type="primary">rnt</name>
    <name type="ordered locus">PA3528</name>
</gene>
<keyword id="KW-0002">3D-structure</keyword>
<keyword id="KW-0269">Exonuclease</keyword>
<keyword id="KW-0378">Hydrolase</keyword>
<keyword id="KW-0460">Magnesium</keyword>
<keyword id="KW-0479">Metal-binding</keyword>
<keyword id="KW-0540">Nuclease</keyword>
<keyword id="KW-1185">Reference proteome</keyword>
<keyword id="KW-0819">tRNA processing</keyword>
<accession>Q9HY82</accession>